<organism>
    <name type="scientific">Desulfitobacterium hafniense (strain DSM 10664 / DCB-2)</name>
    <dbReference type="NCBI Taxonomy" id="272564"/>
    <lineage>
        <taxon>Bacteria</taxon>
        <taxon>Bacillati</taxon>
        <taxon>Bacillota</taxon>
        <taxon>Clostridia</taxon>
        <taxon>Eubacteriales</taxon>
        <taxon>Desulfitobacteriaceae</taxon>
        <taxon>Desulfitobacterium</taxon>
    </lineage>
</organism>
<keyword id="KW-0687">Ribonucleoprotein</keyword>
<keyword id="KW-0689">Ribosomal protein</keyword>
<keyword id="KW-0694">RNA-binding</keyword>
<keyword id="KW-0699">rRNA-binding</keyword>
<gene>
    <name evidence="1" type="primary">rplW</name>
    <name type="ordered locus">Dhaf_0424</name>
</gene>
<comment type="function">
    <text evidence="1">One of the early assembly proteins it binds 23S rRNA. One of the proteins that surrounds the polypeptide exit tunnel on the outside of the ribosome. Forms the main docking site for trigger factor binding to the ribosome.</text>
</comment>
<comment type="subunit">
    <text evidence="1">Part of the 50S ribosomal subunit. Contacts protein L29, and trigger factor when it is bound to the ribosome.</text>
</comment>
<comment type="similarity">
    <text evidence="1">Belongs to the universal ribosomal protein uL23 family.</text>
</comment>
<protein>
    <recommendedName>
        <fullName evidence="1">Large ribosomal subunit protein uL23</fullName>
    </recommendedName>
    <alternativeName>
        <fullName evidence="2">50S ribosomal protein L23</fullName>
    </alternativeName>
</protein>
<evidence type="ECO:0000255" key="1">
    <source>
        <dbReference type="HAMAP-Rule" id="MF_01369"/>
    </source>
</evidence>
<evidence type="ECO:0000305" key="2"/>
<name>RL23_DESHD</name>
<proteinExistence type="inferred from homology"/>
<accession>B8G1W8</accession>
<feature type="chain" id="PRO_1000184085" description="Large ribosomal subunit protein uL23">
    <location>
        <begin position="1"/>
        <end position="95"/>
    </location>
</feature>
<dbReference type="EMBL" id="CP001336">
    <property type="protein sequence ID" value="ACL18491.1"/>
    <property type="molecule type" value="Genomic_DNA"/>
</dbReference>
<dbReference type="RefSeq" id="WP_015942755.1">
    <property type="nucleotide sequence ID" value="NC_011830.1"/>
</dbReference>
<dbReference type="SMR" id="B8G1W8"/>
<dbReference type="KEGG" id="dhd:Dhaf_0424"/>
<dbReference type="HOGENOM" id="CLU_037562_3_2_9"/>
<dbReference type="Proteomes" id="UP000007726">
    <property type="component" value="Chromosome"/>
</dbReference>
<dbReference type="GO" id="GO:1990904">
    <property type="term" value="C:ribonucleoprotein complex"/>
    <property type="evidence" value="ECO:0007669"/>
    <property type="project" value="UniProtKB-KW"/>
</dbReference>
<dbReference type="GO" id="GO:0005840">
    <property type="term" value="C:ribosome"/>
    <property type="evidence" value="ECO:0007669"/>
    <property type="project" value="UniProtKB-KW"/>
</dbReference>
<dbReference type="GO" id="GO:0019843">
    <property type="term" value="F:rRNA binding"/>
    <property type="evidence" value="ECO:0007669"/>
    <property type="project" value="UniProtKB-UniRule"/>
</dbReference>
<dbReference type="GO" id="GO:0003735">
    <property type="term" value="F:structural constituent of ribosome"/>
    <property type="evidence" value="ECO:0007669"/>
    <property type="project" value="InterPro"/>
</dbReference>
<dbReference type="GO" id="GO:0006412">
    <property type="term" value="P:translation"/>
    <property type="evidence" value="ECO:0007669"/>
    <property type="project" value="UniProtKB-UniRule"/>
</dbReference>
<dbReference type="FunFam" id="3.30.70.330:FF:000001">
    <property type="entry name" value="50S ribosomal protein L23"/>
    <property type="match status" value="1"/>
</dbReference>
<dbReference type="Gene3D" id="3.30.70.330">
    <property type="match status" value="1"/>
</dbReference>
<dbReference type="HAMAP" id="MF_01369_B">
    <property type="entry name" value="Ribosomal_uL23_B"/>
    <property type="match status" value="1"/>
</dbReference>
<dbReference type="InterPro" id="IPR012677">
    <property type="entry name" value="Nucleotide-bd_a/b_plait_sf"/>
</dbReference>
<dbReference type="InterPro" id="IPR013025">
    <property type="entry name" value="Ribosomal_uL23-like"/>
</dbReference>
<dbReference type="InterPro" id="IPR012678">
    <property type="entry name" value="Ribosomal_uL23/eL15/eS24_sf"/>
</dbReference>
<dbReference type="InterPro" id="IPR001014">
    <property type="entry name" value="Ribosomal_uL23_CS"/>
</dbReference>
<dbReference type="NCBIfam" id="NF004359">
    <property type="entry name" value="PRK05738.1-3"/>
    <property type="match status" value="1"/>
</dbReference>
<dbReference type="NCBIfam" id="NF004363">
    <property type="entry name" value="PRK05738.2-4"/>
    <property type="match status" value="1"/>
</dbReference>
<dbReference type="NCBIfam" id="NF004366">
    <property type="entry name" value="PRK05738.3-2"/>
    <property type="match status" value="1"/>
</dbReference>
<dbReference type="PANTHER" id="PTHR11620">
    <property type="entry name" value="60S RIBOSOMAL PROTEIN L23A"/>
    <property type="match status" value="1"/>
</dbReference>
<dbReference type="Pfam" id="PF00276">
    <property type="entry name" value="Ribosomal_L23"/>
    <property type="match status" value="1"/>
</dbReference>
<dbReference type="SUPFAM" id="SSF54189">
    <property type="entry name" value="Ribosomal proteins S24e, L23 and L15e"/>
    <property type="match status" value="1"/>
</dbReference>
<dbReference type="PROSITE" id="PS00050">
    <property type="entry name" value="RIBOSOMAL_L23"/>
    <property type="match status" value="1"/>
</dbReference>
<sequence>MRDARDVLKRPVISEKSVGLIEENKYSFWVDTAANKIEIKNAVEKMFKVKVVDVRTINVDGKKKRVGKHVGRTADRKKAIVTLKAGDRIEGFAGL</sequence>
<reference key="1">
    <citation type="journal article" date="2012" name="BMC Microbiol.">
        <title>Genome sequence of Desulfitobacterium hafniense DCB-2, a Gram-positive anaerobe capable of dehalogenation and metal reduction.</title>
        <authorList>
            <person name="Kim S.H."/>
            <person name="Harzman C."/>
            <person name="Davis J.K."/>
            <person name="Hutcheson R."/>
            <person name="Broderick J.B."/>
            <person name="Marsh T.L."/>
            <person name="Tiedje J.M."/>
        </authorList>
    </citation>
    <scope>NUCLEOTIDE SEQUENCE [LARGE SCALE GENOMIC DNA]</scope>
    <source>
        <strain>DSM 10664 / DCB-2</strain>
    </source>
</reference>